<comment type="function">
    <text evidence="1">Component of the ASTRA complex involved in chromatin remodeling.</text>
</comment>
<comment type="subunit">
    <text evidence="1">Component of the ASTRA chromatin remodeling machinery complex.</text>
</comment>
<comment type="subcellular location">
    <subcellularLocation>
        <location evidence="1">Nucleus</location>
    </subcellularLocation>
</comment>
<comment type="similarity">
    <text evidence="2">Belongs to the WD repeat ASA1 family.</text>
</comment>
<keyword id="KW-0156">Chromatin regulator</keyword>
<keyword id="KW-0539">Nucleus</keyword>
<keyword id="KW-1185">Reference proteome</keyword>
<keyword id="KW-0677">Repeat</keyword>
<keyword id="KW-0853">WD repeat</keyword>
<accession>Q6FMH9</accession>
<organism>
    <name type="scientific">Candida glabrata (strain ATCC 2001 / BCRC 20586 / JCM 3761 / NBRC 0622 / NRRL Y-65 / CBS 138)</name>
    <name type="common">Yeast</name>
    <name type="synonym">Nakaseomyces glabratus</name>
    <dbReference type="NCBI Taxonomy" id="284593"/>
    <lineage>
        <taxon>Eukaryota</taxon>
        <taxon>Fungi</taxon>
        <taxon>Dikarya</taxon>
        <taxon>Ascomycota</taxon>
        <taxon>Saccharomycotina</taxon>
        <taxon>Saccharomycetes</taxon>
        <taxon>Saccharomycetales</taxon>
        <taxon>Saccharomycetaceae</taxon>
        <taxon>Nakaseomyces</taxon>
    </lineage>
</organism>
<name>ASA1_CANGA</name>
<proteinExistence type="inferred from homology"/>
<feature type="chain" id="PRO_0000402207" description="ASTRA-associated protein 1">
    <location>
        <begin position="1"/>
        <end position="475"/>
    </location>
</feature>
<feature type="repeat" description="WD 1">
    <location>
        <begin position="11"/>
        <end position="57"/>
    </location>
</feature>
<feature type="repeat" description="WD 2">
    <location>
        <begin position="60"/>
        <end position="98"/>
    </location>
</feature>
<feature type="repeat" description="WD 3">
    <location>
        <begin position="443"/>
        <end position="475"/>
    </location>
</feature>
<dbReference type="EMBL" id="CR380957">
    <property type="protein sequence ID" value="CAG61528.1"/>
    <property type="molecule type" value="Genomic_DNA"/>
</dbReference>
<dbReference type="RefSeq" id="XP_448565.1">
    <property type="nucleotide sequence ID" value="XM_448565.1"/>
</dbReference>
<dbReference type="FunCoup" id="Q6FMH9">
    <property type="interactions" value="65"/>
</dbReference>
<dbReference type="STRING" id="284593.Q6FMH9"/>
<dbReference type="EnsemblFungi" id="CAGL0K07920g-T">
    <property type="protein sequence ID" value="CAGL0K07920g-T-p1"/>
    <property type="gene ID" value="CAGL0K07920g"/>
</dbReference>
<dbReference type="KEGG" id="cgr:2890367"/>
<dbReference type="CGD" id="CAL0134547">
    <property type="gene designation" value="CAGL0K07920g"/>
</dbReference>
<dbReference type="VEuPathDB" id="FungiDB:CAGL0K07920g"/>
<dbReference type="eggNOG" id="ENOG502QU4T">
    <property type="taxonomic scope" value="Eukaryota"/>
</dbReference>
<dbReference type="HOGENOM" id="CLU_045414_1_0_1"/>
<dbReference type="InParanoid" id="Q6FMH9"/>
<dbReference type="OMA" id="LVCCNTQ"/>
<dbReference type="Proteomes" id="UP000002428">
    <property type="component" value="Chromosome K"/>
</dbReference>
<dbReference type="GO" id="GO:0005634">
    <property type="term" value="C:nucleus"/>
    <property type="evidence" value="ECO:0007669"/>
    <property type="project" value="UniProtKB-SubCell"/>
</dbReference>
<dbReference type="GO" id="GO:0006325">
    <property type="term" value="P:chromatin organization"/>
    <property type="evidence" value="ECO:0007669"/>
    <property type="project" value="UniProtKB-KW"/>
</dbReference>
<dbReference type="Gene3D" id="2.130.10.10">
    <property type="entry name" value="YVTN repeat-like/Quinoprotein amine dehydrogenase"/>
    <property type="match status" value="1"/>
</dbReference>
<dbReference type="InterPro" id="IPR015943">
    <property type="entry name" value="WD40/YVTN_repeat-like_dom_sf"/>
</dbReference>
<dbReference type="InterPro" id="IPR036322">
    <property type="entry name" value="WD40_repeat_dom_sf"/>
</dbReference>
<dbReference type="SUPFAM" id="SSF50978">
    <property type="entry name" value="WD40 repeat-like"/>
    <property type="match status" value="1"/>
</dbReference>
<dbReference type="PROSITE" id="PS00678">
    <property type="entry name" value="WD_REPEATS_1"/>
    <property type="match status" value="1"/>
</dbReference>
<evidence type="ECO:0000250" key="1"/>
<evidence type="ECO:0000305" key="2"/>
<protein>
    <recommendedName>
        <fullName>ASTRA-associated protein 1</fullName>
    </recommendedName>
</protein>
<sequence length="475" mass="53471">MERAATHFLRLHKSGISALCSGVIDPDYGITSPVLFSGDIDGEVTIWNLITRRPIFTSKICNEQVVDIQFLEGKYLSLLCKDHKLRLYELLKLGAIVKQSDFGGGDKVDLKQIFEVPVNTLNFANYVLTYLGNNKFELVTCHTQDAHFIDIYEFETPELNSLKRFSKAIDFLPMLRDRFGDNLLPKMDGLGIIMKFYKVNEVVYCGFESGYVIAFRRYRNKPLYRKRVSGFIGKPINECASGISKLLQHENVETSSSVNDLELDNVIEIVLVDRAHYPDPVLDMAPNPKKNGIICSSTTNKLVLTSVDEQYLAGPNSAYIFKSDEYLLDKKNCLLMSTNLKIDGSAVKDMMCKNIGFVLSLGDYIITGNWSGKTYIGRIESDKAVLAAAKSRSLIEVNESPVGNIQQDKSIQKSSKHTKIGAMTGFEVKDKEPDKLMCKNKELTPGKLRRLNAFVQSKWYFIGYTDGTIGLYRAE</sequence>
<reference key="1">
    <citation type="journal article" date="2004" name="Nature">
        <title>Genome evolution in yeasts.</title>
        <authorList>
            <person name="Dujon B."/>
            <person name="Sherman D."/>
            <person name="Fischer G."/>
            <person name="Durrens P."/>
            <person name="Casaregola S."/>
            <person name="Lafontaine I."/>
            <person name="de Montigny J."/>
            <person name="Marck C."/>
            <person name="Neuveglise C."/>
            <person name="Talla E."/>
            <person name="Goffard N."/>
            <person name="Frangeul L."/>
            <person name="Aigle M."/>
            <person name="Anthouard V."/>
            <person name="Babour A."/>
            <person name="Barbe V."/>
            <person name="Barnay S."/>
            <person name="Blanchin S."/>
            <person name="Beckerich J.-M."/>
            <person name="Beyne E."/>
            <person name="Bleykasten C."/>
            <person name="Boisrame A."/>
            <person name="Boyer J."/>
            <person name="Cattolico L."/>
            <person name="Confanioleri F."/>
            <person name="de Daruvar A."/>
            <person name="Despons L."/>
            <person name="Fabre E."/>
            <person name="Fairhead C."/>
            <person name="Ferry-Dumazet H."/>
            <person name="Groppi A."/>
            <person name="Hantraye F."/>
            <person name="Hennequin C."/>
            <person name="Jauniaux N."/>
            <person name="Joyet P."/>
            <person name="Kachouri R."/>
            <person name="Kerrest A."/>
            <person name="Koszul R."/>
            <person name="Lemaire M."/>
            <person name="Lesur I."/>
            <person name="Ma L."/>
            <person name="Muller H."/>
            <person name="Nicaud J.-M."/>
            <person name="Nikolski M."/>
            <person name="Oztas S."/>
            <person name="Ozier-Kalogeropoulos O."/>
            <person name="Pellenz S."/>
            <person name="Potier S."/>
            <person name="Richard G.-F."/>
            <person name="Straub M.-L."/>
            <person name="Suleau A."/>
            <person name="Swennen D."/>
            <person name="Tekaia F."/>
            <person name="Wesolowski-Louvel M."/>
            <person name="Westhof E."/>
            <person name="Wirth B."/>
            <person name="Zeniou-Meyer M."/>
            <person name="Zivanovic Y."/>
            <person name="Bolotin-Fukuhara M."/>
            <person name="Thierry A."/>
            <person name="Bouchier C."/>
            <person name="Caudron B."/>
            <person name="Scarpelli C."/>
            <person name="Gaillardin C."/>
            <person name="Weissenbach J."/>
            <person name="Wincker P."/>
            <person name="Souciet J.-L."/>
        </authorList>
    </citation>
    <scope>NUCLEOTIDE SEQUENCE [LARGE SCALE GENOMIC DNA]</scope>
    <source>
        <strain>ATCC 2001 / BCRC 20586 / JCM 3761 / NBRC 0622 / NRRL Y-65 / CBS 138</strain>
    </source>
</reference>
<gene>
    <name type="primary">ASA1</name>
    <name type="ordered locus">CAGL0K07920g</name>
</gene>